<comment type="function">
    <text evidence="1 3 6 10 11 14">Transcription activator, when associated with BHLH2/EGL3/MYC146 or BHLH12/MYC1. Involved in epidermal cell fate specification in leaves. Together with TTG1 and GL3, promotes trichome formation and endoreplication. Regulates the production of a signal that induces hair (trichome) precursor cells on leaf primordia to differentiate. Binds to the WER-binding sites (WBS) promoter regions and activates the transcription of target genes (By similarity).</text>
</comment>
<comment type="subunit">
    <text evidence="3 8 9 10 11 12">Homodimer and heterodimer with MYB82 (PubMed:24803498). Interacts directly with GL3 and BHLH2. Part of a complex made of GL1, GL3 or BHLH2, and TTG1. Also interacts with BHLH2/EGL3/MYC146 and BHLH12/MYC1. Interacts with MYB82 (PubMed:24803498).</text>
</comment>
<comment type="interaction">
    <interactant intactId="EBI-1543742">
        <id>P27900</id>
    </interactant>
    <interactant intactId="EBI-533348">
        <id>Q9FN69</id>
        <label>GL3</label>
    </interactant>
    <organismsDiffer>false</organismsDiffer>
    <experiments>5</experiments>
</comment>
<comment type="subcellular location">
    <subcellularLocation>
        <location evidence="2 9">Nucleus</location>
    </subcellularLocation>
    <text>Detected in trichome nucleus.</text>
</comment>
<comment type="tissue specificity">
    <text evidence="4 14">Expressed in leaves, stems and flowers (PubMed:11437443). Expressed in trichome cells and in leaf primordia (PubMed:9625690).</text>
</comment>
<comment type="developmental stage">
    <text evidence="11">Ubiquitous in young leaves primordia. Becomes more prominent in developing trichome cells but disappears progressively when trichomes begin to initiate branches.</text>
</comment>
<comment type="induction">
    <text evidence="7 14">Up-regulated by gibberellins (PubMed:9625690). May be regulated by GEBP and GEBP-like proteins (PubMed:12535344).</text>
</comment>
<comment type="online information" name="Protein Spotlight">
    <link uri="https://www.proteinspotlight.org/back_issues/120"/>
    <text>More to it than meets the finger - Issue 120 of August 2010</text>
</comment>
<gene>
    <name evidence="18" type="primary">GL1</name>
    <name type="synonym">MYB0</name>
    <name evidence="19" type="ordered locus">At3g27920</name>
    <name evidence="20" type="ORF">K16N12.17</name>
</gene>
<organism>
    <name type="scientific">Arabidopsis thaliana</name>
    <name type="common">Mouse-ear cress</name>
    <dbReference type="NCBI Taxonomy" id="3702"/>
    <lineage>
        <taxon>Eukaryota</taxon>
        <taxon>Viridiplantae</taxon>
        <taxon>Streptophyta</taxon>
        <taxon>Embryophyta</taxon>
        <taxon>Tracheophyta</taxon>
        <taxon>Spermatophyta</taxon>
        <taxon>Magnoliopsida</taxon>
        <taxon>eudicotyledons</taxon>
        <taxon>Gunneridae</taxon>
        <taxon>Pentapetalae</taxon>
        <taxon>rosids</taxon>
        <taxon>malvids</taxon>
        <taxon>Brassicales</taxon>
        <taxon>Brassicaceae</taxon>
        <taxon>Camelineae</taxon>
        <taxon>Arabidopsis</taxon>
    </lineage>
</organism>
<sequence length="228" mass="26339">MRIRRRDEKENQEYKKGLWTVEEDNILMDYVLNHGTGQWNRIVRKTGLKRCGKSCRLRWMNYLSPNVNKGNFTEQEEDLIIRLHKLLGNRWSLIAKRVPGRTDNQVKNYWNTHLSKKLVGDYSSAVKTTGEDDDSPPSLFITAATPSSCHHQQENIYENIAKSFNGVVSASYEDKPKQELAQKDVLMATTNDPSHYYGNNALWVHDDDFELSSLVMMNFASGDVEYCL</sequence>
<name>GL1_ARATH</name>
<evidence type="ECO:0000250" key="1"/>
<evidence type="ECO:0000255" key="2">
    <source>
        <dbReference type="PROSITE-ProRule" id="PRU00625"/>
    </source>
</evidence>
<evidence type="ECO:0000269" key="3">
    <source>
    </source>
</evidence>
<evidence type="ECO:0000269" key="4">
    <source>
    </source>
</evidence>
<evidence type="ECO:0000269" key="5">
    <source>
    </source>
</evidence>
<evidence type="ECO:0000269" key="6">
    <source>
    </source>
</evidence>
<evidence type="ECO:0000269" key="7">
    <source>
    </source>
</evidence>
<evidence type="ECO:0000269" key="8">
    <source>
    </source>
</evidence>
<evidence type="ECO:0000269" key="9">
    <source>
    </source>
</evidence>
<evidence type="ECO:0000269" key="10">
    <source>
    </source>
</evidence>
<evidence type="ECO:0000269" key="11">
    <source>
    </source>
</evidence>
<evidence type="ECO:0000269" key="12">
    <source>
    </source>
</evidence>
<evidence type="ECO:0000269" key="13">
    <source>
    </source>
</evidence>
<evidence type="ECO:0000269" key="14">
    <source>
    </source>
</evidence>
<evidence type="ECO:0000303" key="15">
    <source>
    </source>
</evidence>
<evidence type="ECO:0000303" key="16">
    <source>
    </source>
</evidence>
<evidence type="ECO:0000303" key="17">
    <source>
    </source>
</evidence>
<evidence type="ECO:0000303" key="18">
    <source>
    </source>
</evidence>
<evidence type="ECO:0000312" key="19">
    <source>
        <dbReference type="Araport" id="AT3G27920"/>
    </source>
</evidence>
<evidence type="ECO:0000312" key="20">
    <source>
        <dbReference type="EMBL" id="BAB02538.1"/>
    </source>
</evidence>
<protein>
    <recommendedName>
        <fullName evidence="18">Trichome differentiation protein GL1</fullName>
    </recommendedName>
    <alternativeName>
        <fullName>Myb-related protein 0</fullName>
        <shortName>AtMYB0</shortName>
    </alternativeName>
    <alternativeName>
        <fullName evidence="16">Protein GLABRA 1</fullName>
    </alternativeName>
    <alternativeName>
        <fullName evidence="15">Protein GLABROUS 1</fullName>
    </alternativeName>
    <alternativeName>
        <fullName evidence="17">R2R3-MYB transcription factor GL1</fullName>
    </alternativeName>
</protein>
<proteinExistence type="evidence at protein level"/>
<keyword id="KW-0010">Activator</keyword>
<keyword id="KW-0217">Developmental protein</keyword>
<keyword id="KW-0238">DNA-binding</keyword>
<keyword id="KW-0539">Nucleus</keyword>
<keyword id="KW-1185">Reference proteome</keyword>
<keyword id="KW-0677">Repeat</keyword>
<keyword id="KW-0804">Transcription</keyword>
<keyword id="KW-0805">Transcription regulation</keyword>
<accession>P27900</accession>
<accession>Q39109</accession>
<accession>Q53YQ0</accession>
<accession>Q93V34</accession>
<accession>Q93VW0</accession>
<accession>Q93WP0</accession>
<accession>Q947R6</accession>
<accession>Q9LF81</accession>
<accession>Q9LF82</accession>
<accession>Q9ST42</accession>
<feature type="chain" id="PRO_0000197071" description="Trichome differentiation protein GL1">
    <location>
        <begin position="1"/>
        <end position="228"/>
    </location>
</feature>
<feature type="domain" description="HTH myb-type 1" evidence="2">
    <location>
        <begin position="11"/>
        <end position="63"/>
    </location>
</feature>
<feature type="domain" description="HTH myb-type 2" evidence="2">
    <location>
        <begin position="64"/>
        <end position="118"/>
    </location>
</feature>
<feature type="DNA-binding region" description="H-T-H motif" evidence="2">
    <location>
        <begin position="39"/>
        <end position="63"/>
    </location>
</feature>
<feature type="DNA-binding region" description="H-T-H motif" evidence="2">
    <location>
        <begin position="91"/>
        <end position="114"/>
    </location>
</feature>
<feature type="sequence variant" description="In strain: cv. Can-0." evidence="5">
    <original>GED</original>
    <variation>VEE</variation>
    <location>
        <begin position="130"/>
        <end position="132"/>
    </location>
</feature>
<feature type="sequence variant" description="In strain: cv. Kas-1, cv. Ms-0." evidence="5">
    <location>
        <position position="148"/>
    </location>
</feature>
<feature type="sequence variant" description="In strain: cv. Aa-0, cv. An-1, cv. Bur-0, cv. Can-0, cv. Es-0, cv. Gr-1, cv. Hi-0, cv. Ita-0, cv. Kas-1, cv. Ms-0, cv. Mt-0, cv. Nd-0, cv. No-0, cv. Oy-0, cv. RLD, cv. Tsu-0, cv. Wassilewskija and cv. Yo-0." evidence="5">
    <original>C</original>
    <variation>R</variation>
    <location>
        <position position="149"/>
    </location>
</feature>
<feature type="sequence variant" description="In strain: cv. Di-0 and cv. Landsberg erecta." evidence="5">
    <original>P</original>
    <variation>R</variation>
    <location>
        <position position="176"/>
    </location>
</feature>
<feature type="sequence variant" description="In strain: cv. Aa-0, cv. An-1, cv. Bur-0, cv. Can-0, cv. Es-0, cv. Gr-1, cv. Hi-0, cv. Ita-0, cv. Kas-1, cv. Ms-0, cv. Mt-0, cv. Nd-0, cv. No-0, cv. Oy-0, cv. RLD, cv. Tsu-0, cv. Wassilewskija and cv. Yo-0." evidence="5">
    <original>GDV</original>
    <variation>SDI</variation>
    <location>
        <begin position="222"/>
        <end position="224"/>
    </location>
</feature>
<feature type="mutagenesis site" description="In gl1-65; few trichomes on leaf margins, cauline leaves, and stems." evidence="5">
    <original>G</original>
    <variation>R</variation>
    <location>
        <position position="100"/>
    </location>
</feature>
<feature type="mutagenesis site" description="In gl1-323; few trichomes on leaf margins, cauline leaves." evidence="13">
    <location>
        <begin position="182"/>
        <end position="228"/>
    </location>
</feature>
<feature type="mutagenesis site" description="In gl1-2; reduced trichome density, truncated trichomes." evidence="13">
    <location>
        <begin position="202"/>
        <end position="228"/>
    </location>
</feature>
<dbReference type="EMBL" id="M79448">
    <property type="protein sequence ID" value="AAC97387.1"/>
    <property type="molecule type" value="Genomic_DNA"/>
</dbReference>
<dbReference type="EMBL" id="L22786">
    <property type="protein sequence ID" value="AAC97388.1"/>
    <property type="molecule type" value="Genomic_DNA"/>
</dbReference>
<dbReference type="EMBL" id="AB006078">
    <property type="protein sequence ID" value="BAA86879.1"/>
    <property type="molecule type" value="Genomic_DNA"/>
</dbReference>
<dbReference type="EMBL" id="AJ243899">
    <property type="protein sequence ID" value="CAB97484.1"/>
    <property type="molecule type" value="Genomic_DNA"/>
</dbReference>
<dbReference type="EMBL" id="AJ243900">
    <property type="protein sequence ID" value="CAB97485.1"/>
    <property type="molecule type" value="Genomic_DNA"/>
</dbReference>
<dbReference type="EMBL" id="AF263690">
    <property type="protein sequence ID" value="AAL01215.1"/>
    <property type="molecule type" value="Genomic_DNA"/>
</dbReference>
<dbReference type="EMBL" id="AF263691">
    <property type="protein sequence ID" value="AAL01216.1"/>
    <property type="molecule type" value="Genomic_DNA"/>
</dbReference>
<dbReference type="EMBL" id="AF263692">
    <property type="protein sequence ID" value="AAL01217.1"/>
    <property type="molecule type" value="Genomic_DNA"/>
</dbReference>
<dbReference type="EMBL" id="AF263693">
    <property type="protein sequence ID" value="AAL01218.1"/>
    <property type="molecule type" value="Genomic_DNA"/>
</dbReference>
<dbReference type="EMBL" id="AF263694">
    <property type="protein sequence ID" value="AAL01219.1"/>
    <property type="molecule type" value="Genomic_DNA"/>
</dbReference>
<dbReference type="EMBL" id="AF263695">
    <property type="protein sequence ID" value="AAL01220.1"/>
    <property type="molecule type" value="Genomic_DNA"/>
</dbReference>
<dbReference type="EMBL" id="AF263696">
    <property type="protein sequence ID" value="AAL01221.1"/>
    <property type="molecule type" value="Genomic_DNA"/>
</dbReference>
<dbReference type="EMBL" id="AF263697">
    <property type="protein sequence ID" value="AAL01222.1"/>
    <property type="molecule type" value="Genomic_DNA"/>
</dbReference>
<dbReference type="EMBL" id="AF263698">
    <property type="protein sequence ID" value="AAL01223.1"/>
    <property type="molecule type" value="Genomic_DNA"/>
</dbReference>
<dbReference type="EMBL" id="AF263699">
    <property type="protein sequence ID" value="AAL01224.1"/>
    <property type="molecule type" value="Genomic_DNA"/>
</dbReference>
<dbReference type="EMBL" id="AF263700">
    <property type="protein sequence ID" value="AAL01225.1"/>
    <property type="molecule type" value="Genomic_DNA"/>
</dbReference>
<dbReference type="EMBL" id="AF263701">
    <property type="protein sequence ID" value="AAL01226.1"/>
    <property type="molecule type" value="Genomic_DNA"/>
</dbReference>
<dbReference type="EMBL" id="AF263702">
    <property type="protein sequence ID" value="AAL01227.1"/>
    <property type="molecule type" value="Genomic_DNA"/>
</dbReference>
<dbReference type="EMBL" id="AF263703">
    <property type="protein sequence ID" value="AAL01228.1"/>
    <property type="molecule type" value="Genomic_DNA"/>
</dbReference>
<dbReference type="EMBL" id="AF263704">
    <property type="protein sequence ID" value="AAL01229.1"/>
    <property type="molecule type" value="Genomic_DNA"/>
</dbReference>
<dbReference type="EMBL" id="AF263705">
    <property type="protein sequence ID" value="AAL01230.1"/>
    <property type="molecule type" value="Genomic_DNA"/>
</dbReference>
<dbReference type="EMBL" id="AF263706">
    <property type="protein sequence ID" value="AAL01231.1"/>
    <property type="molecule type" value="Genomic_DNA"/>
</dbReference>
<dbReference type="EMBL" id="AF263707">
    <property type="protein sequence ID" value="AAL01232.1"/>
    <property type="molecule type" value="Genomic_DNA"/>
</dbReference>
<dbReference type="EMBL" id="AF263708">
    <property type="protein sequence ID" value="AAL01233.1"/>
    <property type="molecule type" value="Genomic_DNA"/>
</dbReference>
<dbReference type="EMBL" id="AF263709">
    <property type="protein sequence ID" value="AAL01234.1"/>
    <property type="molecule type" value="Genomic_DNA"/>
</dbReference>
<dbReference type="EMBL" id="AF263710">
    <property type="protein sequence ID" value="AAL01235.1"/>
    <property type="molecule type" value="Genomic_DNA"/>
</dbReference>
<dbReference type="EMBL" id="AF263711">
    <property type="protein sequence ID" value="AAL01236.1"/>
    <property type="molecule type" value="Genomic_DNA"/>
</dbReference>
<dbReference type="EMBL" id="AF263712">
    <property type="protein sequence ID" value="AAL01237.1"/>
    <property type="molecule type" value="Genomic_DNA"/>
</dbReference>
<dbReference type="EMBL" id="AF263713">
    <property type="protein sequence ID" value="AAL01238.1"/>
    <property type="molecule type" value="Genomic_DNA"/>
</dbReference>
<dbReference type="EMBL" id="AF263714">
    <property type="protein sequence ID" value="AAL01239.1"/>
    <property type="molecule type" value="Genomic_DNA"/>
</dbReference>
<dbReference type="EMBL" id="AF263715">
    <property type="protein sequence ID" value="AAL01240.1"/>
    <property type="molecule type" value="Genomic_DNA"/>
</dbReference>
<dbReference type="EMBL" id="AF263718">
    <property type="protein sequence ID" value="AAL01243.1"/>
    <property type="molecule type" value="Genomic_DNA"/>
</dbReference>
<dbReference type="EMBL" id="AF263719">
    <property type="protein sequence ID" value="AAL01244.1"/>
    <property type="molecule type" value="Genomic_DNA"/>
</dbReference>
<dbReference type="EMBL" id="AF495524">
    <property type="protein sequence ID" value="AAM14620.1"/>
    <property type="molecule type" value="mRNA"/>
</dbReference>
<dbReference type="EMBL" id="AY519590">
    <property type="protein sequence ID" value="AAS10060.1"/>
    <property type="molecule type" value="mRNA"/>
</dbReference>
<dbReference type="EMBL" id="AP000371">
    <property type="protein sequence ID" value="BAB02538.1"/>
    <property type="molecule type" value="Genomic_DNA"/>
</dbReference>
<dbReference type="EMBL" id="CP002686">
    <property type="protein sequence ID" value="AEE77380.1"/>
    <property type="molecule type" value="Genomic_DNA"/>
</dbReference>
<dbReference type="PIR" id="A39289">
    <property type="entry name" value="TVMUG1"/>
</dbReference>
<dbReference type="RefSeq" id="NP_189430.1">
    <property type="nucleotide sequence ID" value="NM_113708.2"/>
</dbReference>
<dbReference type="SMR" id="P27900"/>
<dbReference type="BioGRID" id="7745">
    <property type="interactions" value="10"/>
</dbReference>
<dbReference type="DIP" id="DIP-38476N"/>
<dbReference type="FunCoup" id="P27900">
    <property type="interactions" value="5"/>
</dbReference>
<dbReference type="IntAct" id="P27900">
    <property type="interactions" value="5"/>
</dbReference>
<dbReference type="STRING" id="3702.P27900"/>
<dbReference type="PaxDb" id="3702-AT3G27920.1"/>
<dbReference type="EnsemblPlants" id="AT3G27920.1">
    <property type="protein sequence ID" value="AT3G27920.1"/>
    <property type="gene ID" value="AT3G27920"/>
</dbReference>
<dbReference type="GeneID" id="822415"/>
<dbReference type="Gramene" id="AT3G27920.1">
    <property type="protein sequence ID" value="AT3G27920.1"/>
    <property type="gene ID" value="AT3G27920"/>
</dbReference>
<dbReference type="KEGG" id="ath:AT3G27920"/>
<dbReference type="Araport" id="AT3G27920"/>
<dbReference type="TAIR" id="AT3G27920">
    <property type="gene designation" value="GL1"/>
</dbReference>
<dbReference type="eggNOG" id="KOG0048">
    <property type="taxonomic scope" value="Eukaryota"/>
</dbReference>
<dbReference type="HOGENOM" id="CLU_028567_25_8_1"/>
<dbReference type="InParanoid" id="P27900"/>
<dbReference type="OMA" id="VMMNFAS"/>
<dbReference type="PhylomeDB" id="P27900"/>
<dbReference type="PRO" id="PR:P27900"/>
<dbReference type="Proteomes" id="UP000006548">
    <property type="component" value="Chromosome 3"/>
</dbReference>
<dbReference type="ExpressionAtlas" id="P27900">
    <property type="expression patterns" value="baseline and differential"/>
</dbReference>
<dbReference type="GO" id="GO:0005634">
    <property type="term" value="C:nucleus"/>
    <property type="evidence" value="ECO:0000304"/>
    <property type="project" value="TAIR"/>
</dbReference>
<dbReference type="GO" id="GO:0003677">
    <property type="term" value="F:DNA binding"/>
    <property type="evidence" value="ECO:0000314"/>
    <property type="project" value="TAIR"/>
</dbReference>
<dbReference type="GO" id="GO:0003700">
    <property type="term" value="F:DNA-binding transcription factor activity"/>
    <property type="evidence" value="ECO:0000250"/>
    <property type="project" value="TAIR"/>
</dbReference>
<dbReference type="GO" id="GO:0001708">
    <property type="term" value="P:cell fate specification"/>
    <property type="evidence" value="ECO:0000315"/>
    <property type="project" value="TAIR"/>
</dbReference>
<dbReference type="GO" id="GO:0010154">
    <property type="term" value="P:fruit development"/>
    <property type="evidence" value="ECO:0000315"/>
    <property type="project" value="TAIR"/>
</dbReference>
<dbReference type="GO" id="GO:0009740">
    <property type="term" value="P:gibberellic acid mediated signaling pathway"/>
    <property type="evidence" value="ECO:0000304"/>
    <property type="project" value="TAIR"/>
</dbReference>
<dbReference type="GO" id="GO:0009867">
    <property type="term" value="P:jasmonic acid mediated signaling pathway"/>
    <property type="evidence" value="ECO:0000315"/>
    <property type="project" value="TAIR"/>
</dbReference>
<dbReference type="GO" id="GO:0032880">
    <property type="term" value="P:regulation of protein localization"/>
    <property type="evidence" value="ECO:0000315"/>
    <property type="project" value="TAIR"/>
</dbReference>
<dbReference type="GO" id="GO:2000039">
    <property type="term" value="P:regulation of trichome morphogenesis"/>
    <property type="evidence" value="ECO:0000315"/>
    <property type="project" value="TAIR"/>
</dbReference>
<dbReference type="GO" id="GO:0010026">
    <property type="term" value="P:trichome differentiation"/>
    <property type="evidence" value="ECO:0000315"/>
    <property type="project" value="TAIR"/>
</dbReference>
<dbReference type="GO" id="GO:0048629">
    <property type="term" value="P:trichome patterning"/>
    <property type="evidence" value="ECO:0000315"/>
    <property type="project" value="TAIR"/>
</dbReference>
<dbReference type="CDD" id="cd00167">
    <property type="entry name" value="SANT"/>
    <property type="match status" value="2"/>
</dbReference>
<dbReference type="FunFam" id="1.10.10.60:FF:000001">
    <property type="entry name" value="MYB-related transcription factor"/>
    <property type="match status" value="1"/>
</dbReference>
<dbReference type="FunFam" id="1.10.10.60:FF:000353">
    <property type="entry name" value="Transcription factor WER"/>
    <property type="match status" value="1"/>
</dbReference>
<dbReference type="Gene3D" id="1.10.10.60">
    <property type="entry name" value="Homeodomain-like"/>
    <property type="match status" value="2"/>
</dbReference>
<dbReference type="InterPro" id="IPR009057">
    <property type="entry name" value="Homeodomain-like_sf"/>
</dbReference>
<dbReference type="InterPro" id="IPR017930">
    <property type="entry name" value="Myb_dom"/>
</dbReference>
<dbReference type="InterPro" id="IPR015495">
    <property type="entry name" value="Myb_TF_plants"/>
</dbReference>
<dbReference type="InterPro" id="IPR001005">
    <property type="entry name" value="SANT/Myb"/>
</dbReference>
<dbReference type="PANTHER" id="PTHR47999">
    <property type="entry name" value="TRANSCRIPTION FACTOR MYB8-RELATED-RELATED"/>
    <property type="match status" value="1"/>
</dbReference>
<dbReference type="PANTHER" id="PTHR47999:SF59">
    <property type="entry name" value="TRANSCRIPTION FACTOR WER-LIKE"/>
    <property type="match status" value="1"/>
</dbReference>
<dbReference type="Pfam" id="PF00249">
    <property type="entry name" value="Myb_DNA-binding"/>
    <property type="match status" value="2"/>
</dbReference>
<dbReference type="SMART" id="SM00717">
    <property type="entry name" value="SANT"/>
    <property type="match status" value="2"/>
</dbReference>
<dbReference type="SUPFAM" id="SSF46689">
    <property type="entry name" value="Homeodomain-like"/>
    <property type="match status" value="1"/>
</dbReference>
<dbReference type="PROSITE" id="PS51294">
    <property type="entry name" value="HTH_MYB"/>
    <property type="match status" value="2"/>
</dbReference>
<reference key="1">
    <citation type="journal article" date="1991" name="Cell">
        <title>A myb gene required for leaf trichome differentiation in Arabidopsis is expressed in stipules.</title>
        <authorList>
            <person name="Oppenheimer D.G."/>
            <person name="Herman P.L."/>
            <person name="Sivakumaran S."/>
            <person name="Esch J.J."/>
            <person name="Marks M.D."/>
        </authorList>
    </citation>
    <scope>NUCLEOTIDE SEQUENCE [GENOMIC DNA]</scope>
</reference>
<reference key="2">
    <citation type="journal article" date="1994" name="Plant Mol. Biol.">
        <title>Characterization of a weak allele of the GL1 gene of Arabidopsis thaliana.</title>
        <authorList>
            <person name="Esch J.J."/>
            <person name="Oppenheimer D.G."/>
            <person name="Marks M.D."/>
        </authorList>
    </citation>
    <scope>NUCLEOTIDE SEQUENCE [GENOMIC DNA]</scope>
    <scope>MUTAGENESIS OF 182-GLN--LEU-228 AND 202-LEU--LEU-228</scope>
</reference>
<reference key="3">
    <citation type="journal article" date="1998" name="DNA Seq.">
        <title>Nucleotide sequence of the GLABROUS1 gene of Arabidopsis thaliana ecotype Columbia.</title>
        <authorList>
            <person name="Shikazono N."/>
            <person name="Tanaka A."/>
            <person name="Yokota Y."/>
            <person name="Watanabe H."/>
            <person name="Tano S."/>
        </authorList>
    </citation>
    <scope>NUCLEOTIDE SEQUENCE [GENOMIC DNA]</scope>
    <source>
        <strain>cv. Columbia</strain>
    </source>
</reference>
<reference key="4">
    <citation type="journal article" date="2001" name="Mol. Biol. Evol.">
        <title>Trichome distribution in Arabidopsis thaliana and its close relative Arabidopsis lyrata: molecular analysis of the candidate gene GLABROUS1.</title>
        <authorList>
            <person name="Hauser M.-T."/>
            <person name="Harr B."/>
            <person name="Schloetterer C."/>
        </authorList>
    </citation>
    <scope>NUCLEOTIDE SEQUENCE [GENOMIC DNA]</scope>
    <scope>MUTAGENESIS OF GLY-100</scope>
    <scope>VARIANTS 130-GLY--ASP-132 DELINS VAL-GLU-GLU; SER-148 DEL; ARG-149; ARG-176 AND 222-GLY--VAL-224 DELINS SER-ASP-ILE</scope>
    <source>
        <strain>cv. Aa-0</strain>
        <strain>cv. An-1</strain>
        <strain>cv. Ba-1</strain>
        <strain>cv. Bla-1</strain>
        <strain>cv. Bur-0</strain>
        <strain>cv. Can-0</strain>
        <strain>cv. Columbia</strain>
        <strain>cv. Di-0</strain>
        <strain>cv. Es-0</strain>
        <strain>cv. Gr-1</strain>
        <strain>cv. Hi-0</strain>
        <strain>cv. Ita-0</strain>
        <strain>cv. Kas-1</strain>
        <strain>cv. Kon</strain>
        <strain>cv. Landsberg erecta</strain>
        <strain>cv. Ms-0</strain>
        <strain>cv. Mt-0</strain>
        <strain>cv. Nd-0</strain>
        <strain>cv. No-0</strain>
        <strain>cv. Oy-0</strain>
        <strain>cv. RLD</strain>
        <strain>cv. Sha</strain>
        <strain>cv. Te-0</strain>
        <strain>cv. Tsu-0</strain>
        <strain>cv. Wassilewskija</strain>
        <strain>cv. Yo-0</strain>
    </source>
</reference>
<reference key="5">
    <citation type="journal article" date="2001" name="Curr. Opin. Plant Biol.">
        <title>The R2R3-MYB gene family in Arabidopsis thaliana.</title>
        <authorList>
            <person name="Stracke R."/>
            <person name="Werber M."/>
            <person name="Weisshaar B."/>
        </authorList>
    </citation>
    <scope>NUCLEOTIDE SEQUENCE [MRNA]</scope>
    <scope>GENE FAMILY</scope>
    <scope>NOMENCLATURE</scope>
    <source>
        <strain>cv. Columbia</strain>
    </source>
</reference>
<reference key="6">
    <citation type="submission" date="2004-01" db="EMBL/GenBank/DDBJ databases">
        <title>The MYB transcription factor family in Arabidopsis: a genome-wide cloning and expression pattern analysis.</title>
        <authorList>
            <person name="Qu L.-J."/>
            <person name="Gu H."/>
        </authorList>
    </citation>
    <scope>NUCLEOTIDE SEQUENCE [MRNA]</scope>
</reference>
<reference key="7">
    <citation type="journal article" date="2000" name="DNA Res.">
        <title>Structural analysis of Arabidopsis thaliana chromosome 3. II. Sequence features of the 4,251,695 bp regions covered by 90 P1, TAC and BAC clones.</title>
        <authorList>
            <person name="Kaneko T."/>
            <person name="Katoh T."/>
            <person name="Sato S."/>
            <person name="Nakamura Y."/>
            <person name="Asamizu E."/>
            <person name="Tabata S."/>
        </authorList>
    </citation>
    <scope>NUCLEOTIDE SEQUENCE [LARGE SCALE GENOMIC DNA]</scope>
    <source>
        <strain>cv. Columbia</strain>
    </source>
</reference>
<reference key="8">
    <citation type="journal article" date="2017" name="Plant J.">
        <title>Araport11: a complete reannotation of the Arabidopsis thaliana reference genome.</title>
        <authorList>
            <person name="Cheng C.Y."/>
            <person name="Krishnakumar V."/>
            <person name="Chan A.P."/>
            <person name="Thibaud-Nissen F."/>
            <person name="Schobel S."/>
            <person name="Town C.D."/>
        </authorList>
    </citation>
    <scope>GENOME REANNOTATION</scope>
    <source>
        <strain>cv. Columbia</strain>
    </source>
</reference>
<reference key="9">
    <citation type="journal article" date="1998" name="Plant Physiol.">
        <title>Gibberellins promote trichome formation by Up-regulating GLABROUS1 in arabidopsis.</title>
        <authorList>
            <person name="Perazza D."/>
            <person name="Vachon G."/>
            <person name="Herzog M."/>
        </authorList>
    </citation>
    <scope>FUNCTION</scope>
    <scope>INDUCTION BY GIBBERELLINS</scope>
    <scope>TISSUE SPECIFICITY</scope>
</reference>
<reference key="10">
    <citation type="journal article" date="2000" name="Genetics">
        <title>GL3 encodes a bHLH protein that regulates trichome development in arabidopsis through interaction with GL1 and TTG1.</title>
        <authorList>
            <person name="Payne C.T."/>
            <person name="Zhang F."/>
            <person name="Lloyd A.M."/>
        </authorList>
    </citation>
    <scope>FUNCTION</scope>
    <scope>INTERACTION WITH GL3</scope>
</reference>
<reference key="11">
    <citation type="journal article" date="2001" name="Dev. Biol.">
        <title>Ectopic expression of the Arabidopsis AtMYB23 gene induces differentiation of trichome cells.</title>
        <authorList>
            <person name="Kirik V."/>
            <person name="Schnittger A."/>
            <person name="Radchuk V."/>
            <person name="Adler K."/>
            <person name="Huelskamp M."/>
            <person name="Baeumlein H."/>
        </authorList>
    </citation>
    <scope>TISSUE SPECIFICITY</scope>
    <source>
        <strain>cv. Landsberg erecta</strain>
        <tissue>Silique</tissue>
    </source>
</reference>
<reference key="12">
    <citation type="journal article" date="2002" name="EMBO J.">
        <title>TRIPTYCHON and CAPRICE mediate lateral inhibition during trichome and root hair patterning in Arabidopsis.</title>
        <authorList>
            <person name="Schellmann S."/>
            <person name="Schnittger A."/>
            <person name="Kirik V."/>
            <person name="Wada T."/>
            <person name="Okada K."/>
            <person name="Beermann A."/>
            <person name="Thumfahrt J."/>
            <person name="Juergens G."/>
            <person name="Huelskamp M."/>
        </authorList>
    </citation>
    <scope>FUNCTION</scope>
    <source>
        <strain>cv. Columbia</strain>
        <tissue>Root</tissue>
    </source>
</reference>
<reference key="13">
    <citation type="journal article" date="2003" name="Development">
        <title>A network of redundant bHLH proteins functions in all TTG1-dependent pathways of Arabidopsis.</title>
        <authorList>
            <person name="Zhang F."/>
            <person name="Gonzalez A."/>
            <person name="Zhao M."/>
            <person name="Payne C.T."/>
            <person name="Lloyd A.M."/>
        </authorList>
    </citation>
    <scope>INTERACTION WITH BHLH2</scope>
</reference>
<reference key="14">
    <citation type="journal article" date="2003" name="Development">
        <title>A contradictory GLABRA3 allele helps define gene interactions controlling trichome development in Arabidopsis.</title>
        <authorList>
            <person name="Esch J.J."/>
            <person name="Chen M."/>
            <person name="Sanders M."/>
            <person name="Hillestad M."/>
            <person name="Ndkium S."/>
            <person name="Idelkope B."/>
            <person name="Neizer J."/>
            <person name="Marks M.D."/>
        </authorList>
    </citation>
    <scope>INTERACTION WITH GL3</scope>
    <scope>SUBCELLULAR LOCATION</scope>
</reference>
<reference key="15">
    <citation type="journal article" date="2003" name="Plant J.">
        <title>GeBP, the first member of a new gene family in Arabidopsis, encodes a nuclear protein with DNA-binding activity and is regulated by KNAT1.</title>
        <authorList>
            <person name="Curaba J."/>
            <person name="Herzog M."/>
            <person name="Vachon G."/>
        </authorList>
    </citation>
    <scope>INDUCTION BY GEBP</scope>
</reference>
<reference key="16">
    <citation type="journal article" date="2004" name="Plant J.">
        <title>Comprehensive identification of Arabidopsis thaliana MYB transcription factors interacting with R/B-like BHLH proteins.</title>
        <authorList>
            <person name="Zimmermann I.M."/>
            <person name="Heim M.A."/>
            <person name="Weisshaar B."/>
            <person name="Uhrig J.F."/>
        </authorList>
    </citation>
    <scope>FUNCTION</scope>
    <scope>INTERACTION WITH BHLH2 AND BHLH12</scope>
</reference>
<reference key="17">
    <citation type="journal article" date="2005" name="Development">
        <title>Functional diversification of MYB23 and GL1 genes in trichome morphogenesis and initiation.</title>
        <authorList>
            <person name="Kirik V."/>
            <person name="Lee M.M."/>
            <person name="Wester K."/>
            <person name="Herrmann U."/>
            <person name="Zheng Z."/>
            <person name="Oppenheimer D."/>
            <person name="Schiefelbein J."/>
            <person name="Hulskamp M."/>
        </authorList>
    </citation>
    <scope>FUNCTION</scope>
    <scope>INTERACTION WITH GL3</scope>
    <scope>DEVELOPMENTAL STAGE</scope>
</reference>
<reference key="18">
    <citation type="journal article" date="2006" name="Plant Mol. Biol.">
        <title>The MYB transcription factor superfamily of Arabidopsis: expression analysis and phylogenetic comparison with the rice MYB family.</title>
        <authorList>
            <person name="Chen Y."/>
            <person name="Yang X."/>
            <person name="He K."/>
            <person name="Liu M."/>
            <person name="Li J."/>
            <person name="Gao Z."/>
            <person name="Lin Z."/>
            <person name="Zhang Y."/>
            <person name="Wang X."/>
            <person name="Qiu X."/>
            <person name="Shen Y."/>
            <person name="Zhang L."/>
            <person name="Deng X."/>
            <person name="Luo J."/>
            <person name="Deng X.-W."/>
            <person name="Chen Z."/>
            <person name="Gu H."/>
            <person name="Qu L.-J."/>
        </authorList>
    </citation>
    <scope>GENE FAMILY</scope>
</reference>
<reference key="19">
    <citation type="journal article" date="2014" name="J. Exp. Bot.">
        <title>MYB82 functions in regulation of trichome development in Arabidopsis.</title>
        <authorList>
            <person name="Liang G."/>
            <person name="He H."/>
            <person name="Li Y."/>
            <person name="Ai Q."/>
            <person name="Yu D."/>
        </authorList>
    </citation>
    <scope>INTERACTION WITH MYB82</scope>
    <scope>SUBUNIT</scope>
    <source>
        <strain>cv. Columbia</strain>
    </source>
</reference>